<proteinExistence type="evidence at transcript level"/>
<sequence length="889" mass="97771">MAATAASTMSAAAAVTRRINAALRVDATSGDVAAGADGQNGRRSPVAKRVNDGGGGKDDVWVAVDEKDVCGARGGDGAARPPLFRTYKVKGSILHPYRFLILLRLIAIVAFFAWRVRHKNRDGVWLWTMSMVGDVWFGFSWVLNQLPKLSPIKRVPDLAALADRHSGDLPGVDVFVTTVDPVDEPILYTVNTILSILAADYPVDRYACYLSDDGGTLVHYEAMVEVAKFAELWVPFCRKHCVEPRSPENYFAMKTQAYKGGVPGELMSDHRRVRREYEEFKVRIDSLSSTIRQRSDVYNAKHAGENATWMADGTHWPGTWFEPADNHQRGKHAGIVQVLLNHPSCKPRLGLAASAENPVDFSGVDVRLPMLVYISREKRPGYNHQKKAGAMNVMLRVSALLSNAPFVINFDGDHYVNNSQAFRAPMCFMLDGRGRGGENTAFVQFPQRFDDVDPTDRYANHNRVFFDGTMLSLNGLQGPSYLGTGTMFRRVALYGVEPPRWGAAASQIKAMDIANKFGSSTSFVGTMLDGANQERSITPLAVLDESVAGDLAALTACAYEDGTSWGRDVGWVYNIATEDVVTGFRMHRQGWRSVYASVEPAAFRGTAPINLTERLYQILRWSGGSLEMFFSHSNALLAGRRLHPLQRVAYLNMSTYPIVTVFIFFYNLFPVMWLISEQYYIQRPFGEYLLYLVAVIAMIHVIGMFEVKWAGITLLDWCRNEQFYMIGSTGVYPTAVLYMALKLVTGKGIYFRLTSKQTTASSGDKFADLYTVRWVPLLIPTIVIIVVNVAAVGVAVGKAAAWGPLTEPGWLAVLGMVFNVWILVLLYPFALGVMGQWGKRPAVLFVAMAMAVAAVAAMYVAFGAPYQAELSGGAASLGKAAASLTGPSG</sequence>
<evidence type="ECO:0000255" key="1"/>
<evidence type="ECO:0000256" key="2">
    <source>
        <dbReference type="SAM" id="MobiDB-lite"/>
    </source>
</evidence>
<evidence type="ECO:0000269" key="3">
    <source>
    </source>
</evidence>
<evidence type="ECO:0000305" key="4"/>
<accession>Q84S11</accession>
<accession>A0A0P0X7S7</accession>
<accession>Q8W1M8</accession>
<accession>Q944E1</accession>
<feature type="chain" id="PRO_0000319402" description="Mixed-linked glucan synthase 2">
    <location>
        <begin position="1"/>
        <end position="889"/>
    </location>
</feature>
<feature type="transmembrane region" description="Helical" evidence="1">
    <location>
        <begin position="93"/>
        <end position="113"/>
    </location>
</feature>
<feature type="transmembrane region" description="Helical" evidence="1">
    <location>
        <begin position="123"/>
        <end position="143"/>
    </location>
</feature>
<feature type="transmembrane region" description="Helical" evidence="1">
    <location>
        <begin position="655"/>
        <end position="675"/>
    </location>
</feature>
<feature type="transmembrane region" description="Helical" evidence="1">
    <location>
        <begin position="685"/>
        <end position="705"/>
    </location>
</feature>
<feature type="transmembrane region" description="Helical" evidence="1">
    <location>
        <begin position="723"/>
        <end position="743"/>
    </location>
</feature>
<feature type="transmembrane region" description="Helical" evidence="1">
    <location>
        <begin position="777"/>
        <end position="797"/>
    </location>
</feature>
<feature type="transmembrane region" description="Helical" evidence="1">
    <location>
        <begin position="811"/>
        <end position="831"/>
    </location>
</feature>
<feature type="transmembrane region" description="Helical" evidence="1">
    <location>
        <begin position="842"/>
        <end position="862"/>
    </location>
</feature>
<feature type="region of interest" description="Disordered" evidence="2">
    <location>
        <begin position="34"/>
        <end position="53"/>
    </location>
</feature>
<feature type="coiled-coil region" evidence="1">
    <location>
        <begin position="265"/>
        <end position="293"/>
    </location>
</feature>
<feature type="active site" evidence="1">
    <location>
        <position position="213"/>
    </location>
</feature>
<feature type="active site" evidence="1">
    <location>
        <position position="579"/>
    </location>
</feature>
<feature type="binding site" evidence="1">
    <location>
        <position position="411"/>
    </location>
    <ligand>
        <name>substrate</name>
    </ligand>
</feature>
<feature type="binding site" evidence="1">
    <location>
        <position position="413"/>
    </location>
    <ligand>
        <name>substrate</name>
    </ligand>
</feature>
<name>CSLF2_ORYSJ</name>
<protein>
    <recommendedName>
        <fullName>Mixed-linked glucan synthase 2</fullName>
        <ecNumber>2.4.1.-</ecNumber>
    </recommendedName>
    <alternativeName>
        <fullName>1,3;1,4-beta-D-glucan synthase 2</fullName>
    </alternativeName>
    <alternativeName>
        <fullName>Cellulose synthase-like protein F2</fullName>
    </alternativeName>
    <alternativeName>
        <fullName>OsCslF2</fullName>
    </alternativeName>
</protein>
<keyword id="KW-0961">Cell wall biogenesis/degradation</keyword>
<keyword id="KW-0175">Coiled coil</keyword>
<keyword id="KW-0328">Glycosyltransferase</keyword>
<keyword id="KW-0333">Golgi apparatus</keyword>
<keyword id="KW-0472">Membrane</keyword>
<keyword id="KW-1185">Reference proteome</keyword>
<keyword id="KW-0808">Transferase</keyword>
<keyword id="KW-0812">Transmembrane</keyword>
<keyword id="KW-1133">Transmembrane helix</keyword>
<dbReference type="EC" id="2.4.1.-"/>
<dbReference type="EMBL" id="AF432503">
    <property type="protein sequence ID" value="AAL25132.1"/>
    <property type="molecule type" value="Genomic_DNA"/>
</dbReference>
<dbReference type="EMBL" id="AF435651">
    <property type="protein sequence ID" value="AAL38536.1"/>
    <property type="molecule type" value="mRNA"/>
</dbReference>
<dbReference type="EMBL" id="AP004261">
    <property type="protein sequence ID" value="BAD30521.1"/>
    <property type="molecule type" value="Genomic_DNA"/>
</dbReference>
<dbReference type="EMBL" id="AP005126">
    <property type="protein sequence ID" value="BAC65378.1"/>
    <property type="molecule type" value="Genomic_DNA"/>
</dbReference>
<dbReference type="EMBL" id="AP008213">
    <property type="protein sequence ID" value="BAF21860.1"/>
    <property type="molecule type" value="Genomic_DNA"/>
</dbReference>
<dbReference type="EMBL" id="AP014963">
    <property type="protein sequence ID" value="BAT02064.1"/>
    <property type="molecule type" value="Genomic_DNA"/>
</dbReference>
<dbReference type="EMBL" id="AK100523">
    <property type="status" value="NOT_ANNOTATED_CDS"/>
    <property type="molecule type" value="mRNA"/>
</dbReference>
<dbReference type="RefSeq" id="XP_015645336.1">
    <property type="nucleotide sequence ID" value="XM_015789850.1"/>
</dbReference>
<dbReference type="SMR" id="Q84S11"/>
<dbReference type="FunCoup" id="Q84S11">
    <property type="interactions" value="8"/>
</dbReference>
<dbReference type="STRING" id="39947.Q84S11"/>
<dbReference type="CAZy" id="GT2">
    <property type="family name" value="Glycosyltransferase Family 2"/>
</dbReference>
<dbReference type="PaxDb" id="39947-Q84S11"/>
<dbReference type="EnsemblPlants" id="Os07t0552800-01">
    <property type="protein sequence ID" value="Os07t0552800-01"/>
    <property type="gene ID" value="Os07g0552800"/>
</dbReference>
<dbReference type="Gramene" id="Os07t0552800-01">
    <property type="protein sequence ID" value="Os07t0552800-01"/>
    <property type="gene ID" value="Os07g0552800"/>
</dbReference>
<dbReference type="KEGG" id="dosa:Os07g0552800"/>
<dbReference type="eggNOG" id="ENOG502QU14">
    <property type="taxonomic scope" value="Eukaryota"/>
</dbReference>
<dbReference type="InParanoid" id="Q84S11"/>
<dbReference type="OMA" id="FTTICKR"/>
<dbReference type="OrthoDB" id="591726at2759"/>
<dbReference type="Proteomes" id="UP000000763">
    <property type="component" value="Chromosome 7"/>
</dbReference>
<dbReference type="Proteomes" id="UP000059680">
    <property type="component" value="Chromosome 7"/>
</dbReference>
<dbReference type="ExpressionAtlas" id="Q84S11">
    <property type="expression patterns" value="baseline and differential"/>
</dbReference>
<dbReference type="GO" id="GO:0000139">
    <property type="term" value="C:Golgi membrane"/>
    <property type="evidence" value="ECO:0007669"/>
    <property type="project" value="UniProtKB-SubCell"/>
</dbReference>
<dbReference type="GO" id="GO:0005886">
    <property type="term" value="C:plasma membrane"/>
    <property type="evidence" value="ECO:0000318"/>
    <property type="project" value="GO_Central"/>
</dbReference>
<dbReference type="GO" id="GO:0016760">
    <property type="term" value="F:cellulose synthase (UDP-forming) activity"/>
    <property type="evidence" value="ECO:0007669"/>
    <property type="project" value="InterPro"/>
</dbReference>
<dbReference type="GO" id="GO:0071555">
    <property type="term" value="P:cell wall organization"/>
    <property type="evidence" value="ECO:0007669"/>
    <property type="project" value="UniProtKB-KW"/>
</dbReference>
<dbReference type="GO" id="GO:0030244">
    <property type="term" value="P:cellulose biosynthetic process"/>
    <property type="evidence" value="ECO:0007669"/>
    <property type="project" value="InterPro"/>
</dbReference>
<dbReference type="GO" id="GO:0009833">
    <property type="term" value="P:plant-type primary cell wall biogenesis"/>
    <property type="evidence" value="ECO:0000318"/>
    <property type="project" value="GO_Central"/>
</dbReference>
<dbReference type="FunFam" id="3.90.550.10:FF:000027">
    <property type="entry name" value="Cellulose synthase-like protein D4"/>
    <property type="match status" value="1"/>
</dbReference>
<dbReference type="Gene3D" id="3.90.550.10">
    <property type="entry name" value="Spore Coat Polysaccharide Biosynthesis Protein SpsA, Chain A"/>
    <property type="match status" value="1"/>
</dbReference>
<dbReference type="InterPro" id="IPR005150">
    <property type="entry name" value="Cellulose_synth"/>
</dbReference>
<dbReference type="InterPro" id="IPR029044">
    <property type="entry name" value="Nucleotide-diphossugar_trans"/>
</dbReference>
<dbReference type="PANTHER" id="PTHR13301">
    <property type="entry name" value="X-BOX TRANSCRIPTION FACTOR-RELATED"/>
    <property type="match status" value="1"/>
</dbReference>
<dbReference type="Pfam" id="PF03552">
    <property type="entry name" value="Cellulose_synt"/>
    <property type="match status" value="2"/>
</dbReference>
<dbReference type="SUPFAM" id="SSF53448">
    <property type="entry name" value="Nucleotide-diphospho-sugar transferases"/>
    <property type="match status" value="1"/>
</dbReference>
<reference key="1">
    <citation type="journal article" date="2002" name="Plant Physiol.">
        <title>Cellulose synthase-like genes of rice.</title>
        <authorList>
            <person name="Hazen S.P."/>
            <person name="Scott-Craig J.S."/>
            <person name="Walton J.D."/>
        </authorList>
    </citation>
    <scope>NUCLEOTIDE SEQUENCE [GENOMIC DNA]</scope>
    <scope>NUCLEOTIDE SEQUENCE [MRNA] OF 434-889</scope>
</reference>
<reference key="2">
    <citation type="journal article" date="2005" name="Nature">
        <title>The map-based sequence of the rice genome.</title>
        <authorList>
            <consortium name="International rice genome sequencing project (IRGSP)"/>
        </authorList>
    </citation>
    <scope>NUCLEOTIDE SEQUENCE [LARGE SCALE GENOMIC DNA]</scope>
    <source>
        <strain>cv. Nipponbare</strain>
    </source>
</reference>
<reference key="3">
    <citation type="journal article" date="2008" name="Nucleic Acids Res.">
        <title>The rice annotation project database (RAP-DB): 2008 update.</title>
        <authorList>
            <consortium name="The rice annotation project (RAP)"/>
        </authorList>
    </citation>
    <scope>GENOME REANNOTATION</scope>
    <source>
        <strain>cv. Nipponbare</strain>
    </source>
</reference>
<reference key="4">
    <citation type="journal article" date="2013" name="Rice">
        <title>Improvement of the Oryza sativa Nipponbare reference genome using next generation sequence and optical map data.</title>
        <authorList>
            <person name="Kawahara Y."/>
            <person name="de la Bastide M."/>
            <person name="Hamilton J.P."/>
            <person name="Kanamori H."/>
            <person name="McCombie W.R."/>
            <person name="Ouyang S."/>
            <person name="Schwartz D.C."/>
            <person name="Tanaka T."/>
            <person name="Wu J."/>
            <person name="Zhou S."/>
            <person name="Childs K.L."/>
            <person name="Davidson R.M."/>
            <person name="Lin H."/>
            <person name="Quesada-Ocampo L."/>
            <person name="Vaillancourt B."/>
            <person name="Sakai H."/>
            <person name="Lee S.S."/>
            <person name="Kim J."/>
            <person name="Numa H."/>
            <person name="Itoh T."/>
            <person name="Buell C.R."/>
            <person name="Matsumoto T."/>
        </authorList>
    </citation>
    <scope>GENOME REANNOTATION</scope>
    <source>
        <strain>cv. Nipponbare</strain>
    </source>
</reference>
<reference key="5">
    <citation type="journal article" date="2003" name="Science">
        <title>Collection, mapping, and annotation of over 28,000 cDNA clones from japonica rice.</title>
        <authorList>
            <consortium name="The rice full-length cDNA consortium"/>
        </authorList>
    </citation>
    <scope>NUCLEOTIDE SEQUENCE [LARGE SCALE MRNA]</scope>
    <source>
        <strain>cv. Nipponbare</strain>
    </source>
</reference>
<reference key="6">
    <citation type="journal article" date="2006" name="Science">
        <title>Cellulose synthase-like CslF genes mediate the synthesis of cell wall (1,3;1,4)-beta-D-glucans.</title>
        <authorList>
            <person name="Burton R.A."/>
            <person name="Wilson S.M."/>
            <person name="Hrmova M."/>
            <person name="Harvey A.J."/>
            <person name="Shirley N.J."/>
            <person name="Medhurst A."/>
            <person name="Stone B.A."/>
            <person name="Newbigin E.J."/>
            <person name="Bacic A."/>
            <person name="Fincher G.B."/>
        </authorList>
    </citation>
    <scope>FUNCTION</scope>
</reference>
<gene>
    <name type="primary">CSLF2</name>
    <name type="ordered locus">Os07g0552800</name>
    <name type="ordered locus">LOC_Os07g36690</name>
    <name type="ORF">OSJNBb0041B22.126</name>
    <name type="ORF">P0013G11.2</name>
</gene>
<comment type="function">
    <text evidence="3">Catalyzes both beta-1,3 and beta-1,4 glycosidic linkage on beta-D-glucan. Essential for (1,3;1,4)-beta-D-glucans synthesis in grasses and cereals (Poaceae). The mixed-linked glucans (which are not present in walls of dicotyledons or most other monocotyledonous plants) are particularly important constituents of the walls of the starchy endosperm and aleurone cells of cereal grains such as oats, wheat, rice and barley. They can account for up to 70% by weight of the wall.</text>
</comment>
<comment type="subcellular location">
    <subcellularLocation>
        <location evidence="4">Golgi apparatus membrane</location>
        <topology evidence="4">Multi-pass membrane protein</topology>
    </subcellularLocation>
</comment>
<comment type="similarity">
    <text evidence="4">Belongs to the glycosyltransferase 2 family. Plant cellulose synthase-like F subfamily.</text>
</comment>
<comment type="sequence caution" evidence="4">
    <conflict type="erroneous termination">
        <sequence resource="EMBL" id="AK100523"/>
    </conflict>
    <text>Truncated C-terminus.</text>
</comment>
<organism>
    <name type="scientific">Oryza sativa subsp. japonica</name>
    <name type="common">Rice</name>
    <dbReference type="NCBI Taxonomy" id="39947"/>
    <lineage>
        <taxon>Eukaryota</taxon>
        <taxon>Viridiplantae</taxon>
        <taxon>Streptophyta</taxon>
        <taxon>Embryophyta</taxon>
        <taxon>Tracheophyta</taxon>
        <taxon>Spermatophyta</taxon>
        <taxon>Magnoliopsida</taxon>
        <taxon>Liliopsida</taxon>
        <taxon>Poales</taxon>
        <taxon>Poaceae</taxon>
        <taxon>BOP clade</taxon>
        <taxon>Oryzoideae</taxon>
        <taxon>Oryzeae</taxon>
        <taxon>Oryzinae</taxon>
        <taxon>Oryza</taxon>
        <taxon>Oryza sativa</taxon>
    </lineage>
</organism>